<gene>
    <name type="primary">CEG1</name>
    <name type="ordered locus">YALI0E02904g</name>
</gene>
<dbReference type="EC" id="2.7.7.50" evidence="2"/>
<dbReference type="EMBL" id="CR382131">
    <property type="protein sequence ID" value="CAG79058.1"/>
    <property type="molecule type" value="Genomic_DNA"/>
</dbReference>
<dbReference type="RefSeq" id="XP_503479.1">
    <property type="nucleotide sequence ID" value="XM_503479.1"/>
</dbReference>
<dbReference type="SMR" id="Q6C783"/>
<dbReference type="FunCoup" id="Q6C783">
    <property type="interactions" value="448"/>
</dbReference>
<dbReference type="STRING" id="284591.Q6C783"/>
<dbReference type="EnsemblFungi" id="CAG79058">
    <property type="protein sequence ID" value="CAG79058"/>
    <property type="gene ID" value="YALI0_E02904g"/>
</dbReference>
<dbReference type="KEGG" id="yli:2912122"/>
<dbReference type="VEuPathDB" id="FungiDB:YALI0_E02904g"/>
<dbReference type="HOGENOM" id="CLU_021710_0_2_1"/>
<dbReference type="InParanoid" id="Q6C783"/>
<dbReference type="OMA" id="KDYYVCE"/>
<dbReference type="OrthoDB" id="60596at4891"/>
<dbReference type="Proteomes" id="UP000001300">
    <property type="component" value="Chromosome E"/>
</dbReference>
<dbReference type="GO" id="GO:0031533">
    <property type="term" value="C:mRNA capping enzyme complex"/>
    <property type="evidence" value="ECO:0007669"/>
    <property type="project" value="InterPro"/>
</dbReference>
<dbReference type="GO" id="GO:0005524">
    <property type="term" value="F:ATP binding"/>
    <property type="evidence" value="ECO:0007669"/>
    <property type="project" value="InterPro"/>
</dbReference>
<dbReference type="GO" id="GO:0005525">
    <property type="term" value="F:GTP binding"/>
    <property type="evidence" value="ECO:0007669"/>
    <property type="project" value="UniProtKB-KW"/>
</dbReference>
<dbReference type="GO" id="GO:0004484">
    <property type="term" value="F:mRNA guanylyltransferase activity"/>
    <property type="evidence" value="ECO:0000318"/>
    <property type="project" value="GO_Central"/>
</dbReference>
<dbReference type="GO" id="GO:0099122">
    <property type="term" value="F:RNA polymerase II C-terminal domain binding"/>
    <property type="evidence" value="ECO:0007669"/>
    <property type="project" value="EnsemblFungi"/>
</dbReference>
<dbReference type="GO" id="GO:0006370">
    <property type="term" value="P:7-methylguanosine mRNA capping"/>
    <property type="evidence" value="ECO:0000318"/>
    <property type="project" value="GO_Central"/>
</dbReference>
<dbReference type="CDD" id="cd07895">
    <property type="entry name" value="Adenylation_mRNA_capping"/>
    <property type="match status" value="1"/>
</dbReference>
<dbReference type="FunFam" id="3.30.470.30:FF:000011">
    <property type="entry name" value="mRNA-capping enzyme subunit alpha"/>
    <property type="match status" value="1"/>
</dbReference>
<dbReference type="Gene3D" id="3.30.470.30">
    <property type="entry name" value="DNA ligase/mRNA capping enzyme"/>
    <property type="match status" value="1"/>
</dbReference>
<dbReference type="Gene3D" id="2.40.50.140">
    <property type="entry name" value="Nucleic acid-binding proteins"/>
    <property type="match status" value="1"/>
</dbReference>
<dbReference type="InterPro" id="IPR001339">
    <property type="entry name" value="mRNA_cap_enzyme_adenylation"/>
</dbReference>
<dbReference type="InterPro" id="IPR017075">
    <property type="entry name" value="mRNA_cap_enzyme_alpha"/>
</dbReference>
<dbReference type="InterPro" id="IPR013846">
    <property type="entry name" value="mRNA_cap_enzyme_C"/>
</dbReference>
<dbReference type="InterPro" id="IPR051029">
    <property type="entry name" value="mRNA_Capping_Enz/RNA_Phosphat"/>
</dbReference>
<dbReference type="InterPro" id="IPR012340">
    <property type="entry name" value="NA-bd_OB-fold"/>
</dbReference>
<dbReference type="PANTHER" id="PTHR10367">
    <property type="entry name" value="MRNA-CAPPING ENZYME"/>
    <property type="match status" value="1"/>
</dbReference>
<dbReference type="PANTHER" id="PTHR10367:SF17">
    <property type="entry name" value="MRNA-CAPPING ENZYME"/>
    <property type="match status" value="1"/>
</dbReference>
<dbReference type="Pfam" id="PF03919">
    <property type="entry name" value="mRNA_cap_C"/>
    <property type="match status" value="1"/>
</dbReference>
<dbReference type="Pfam" id="PF01331">
    <property type="entry name" value="mRNA_cap_enzyme"/>
    <property type="match status" value="1"/>
</dbReference>
<dbReference type="PIRSF" id="PIRSF036959">
    <property type="entry name" value="mRNA_cap_alpha"/>
    <property type="match status" value="1"/>
</dbReference>
<dbReference type="SUPFAM" id="SSF56091">
    <property type="entry name" value="DNA ligase/mRNA capping enzyme, catalytic domain"/>
    <property type="match status" value="1"/>
</dbReference>
<dbReference type="SUPFAM" id="SSF50249">
    <property type="entry name" value="Nucleic acid-binding proteins"/>
    <property type="match status" value="1"/>
</dbReference>
<reference key="1">
    <citation type="journal article" date="2004" name="Nature">
        <title>Genome evolution in yeasts.</title>
        <authorList>
            <person name="Dujon B."/>
            <person name="Sherman D."/>
            <person name="Fischer G."/>
            <person name="Durrens P."/>
            <person name="Casaregola S."/>
            <person name="Lafontaine I."/>
            <person name="de Montigny J."/>
            <person name="Marck C."/>
            <person name="Neuveglise C."/>
            <person name="Talla E."/>
            <person name="Goffard N."/>
            <person name="Frangeul L."/>
            <person name="Aigle M."/>
            <person name="Anthouard V."/>
            <person name="Babour A."/>
            <person name="Barbe V."/>
            <person name="Barnay S."/>
            <person name="Blanchin S."/>
            <person name="Beckerich J.-M."/>
            <person name="Beyne E."/>
            <person name="Bleykasten C."/>
            <person name="Boisrame A."/>
            <person name="Boyer J."/>
            <person name="Cattolico L."/>
            <person name="Confanioleri F."/>
            <person name="de Daruvar A."/>
            <person name="Despons L."/>
            <person name="Fabre E."/>
            <person name="Fairhead C."/>
            <person name="Ferry-Dumazet H."/>
            <person name="Groppi A."/>
            <person name="Hantraye F."/>
            <person name="Hennequin C."/>
            <person name="Jauniaux N."/>
            <person name="Joyet P."/>
            <person name="Kachouri R."/>
            <person name="Kerrest A."/>
            <person name="Koszul R."/>
            <person name="Lemaire M."/>
            <person name="Lesur I."/>
            <person name="Ma L."/>
            <person name="Muller H."/>
            <person name="Nicaud J.-M."/>
            <person name="Nikolski M."/>
            <person name="Oztas S."/>
            <person name="Ozier-Kalogeropoulos O."/>
            <person name="Pellenz S."/>
            <person name="Potier S."/>
            <person name="Richard G.-F."/>
            <person name="Straub M.-L."/>
            <person name="Suleau A."/>
            <person name="Swennen D."/>
            <person name="Tekaia F."/>
            <person name="Wesolowski-Louvel M."/>
            <person name="Westhof E."/>
            <person name="Wirth B."/>
            <person name="Zeniou-Meyer M."/>
            <person name="Zivanovic Y."/>
            <person name="Bolotin-Fukuhara M."/>
            <person name="Thierry A."/>
            <person name="Bouchier C."/>
            <person name="Caudron B."/>
            <person name="Scarpelli C."/>
            <person name="Gaillardin C."/>
            <person name="Weissenbach J."/>
            <person name="Wincker P."/>
            <person name="Souciet J.-L."/>
        </authorList>
    </citation>
    <scope>NUCLEOTIDE SEQUENCE [LARGE SCALE GENOMIC DNA]</scope>
    <source>
        <strain>CLIB 122 / E 150</strain>
    </source>
</reference>
<comment type="function">
    <text evidence="2">Second step of mRNA capping. Transfer of the GMP moiety of GTP to the 5'-end of RNA via an enzyme-GMP covalent reaction intermediate.</text>
</comment>
<comment type="catalytic activity">
    <reaction evidence="2">
        <text>a 5'-end diphospho-ribonucleoside in mRNA + GTP + H(+) = a 5'-end (5'-triphosphoguanosine)-ribonucleoside in mRNA + diphosphate</text>
        <dbReference type="Rhea" id="RHEA:67012"/>
        <dbReference type="Rhea" id="RHEA-COMP:17165"/>
        <dbReference type="Rhea" id="RHEA-COMP:17166"/>
        <dbReference type="ChEBI" id="CHEBI:15378"/>
        <dbReference type="ChEBI" id="CHEBI:33019"/>
        <dbReference type="ChEBI" id="CHEBI:37565"/>
        <dbReference type="ChEBI" id="CHEBI:167616"/>
        <dbReference type="ChEBI" id="CHEBI:167617"/>
        <dbReference type="EC" id="2.7.7.50"/>
    </reaction>
    <physiologicalReaction direction="left-to-right" evidence="2">
        <dbReference type="Rhea" id="RHEA:67013"/>
    </physiologicalReaction>
</comment>
<comment type="subunit">
    <text evidence="2">Heterodimer. The mRNA-capping enzyme is composed of two separate chains alpha and beta, respectively a mRNA guanylyltransferase and an mRNA 5'-triphosphate monophosphatase.</text>
</comment>
<comment type="subcellular location">
    <subcellularLocation>
        <location evidence="1">Nucleus</location>
    </subcellularLocation>
</comment>
<comment type="similarity">
    <text evidence="4">Belongs to the eukaryotic GTase family.</text>
</comment>
<proteinExistence type="inferred from homology"/>
<sequence length="391" mass="45531">MSGIVPEIPGEQAPPDAAHQLKVDVARLLQKPKLNFPGAQPVSFARKHIEEELFKRDYYVCEKSDGLRCLMYVTWENNPDTGPQQVTYLITRNNEFFFIPMVHFPSNDGKPLQDTIVDGELVLTKAEPRSLHFLMFDCLACNKILLTGRPLDKRLGYLNAAISHPLKEYLHKNPEVARDFPFSVRVKDMQFAYNVMNVFASFPHLPHITDGLIFTCRDHPYVSGTDERILKWKKQDENSVDFLMTMKFPIFEDTNGESWTDYDAKPEITLLVWTGRDGSRPYGELYLTDEEWDNLKALEEPLEERVVECIKDDKKRWRYLRFRDDKTNANYITTVEKVIDSIDDPVSEKNLLDAAPKIKELWKERNRRPRDEDRKRVGGDDHDHGAKRARQ</sequence>
<evidence type="ECO:0000250" key="1"/>
<evidence type="ECO:0000250" key="2">
    <source>
        <dbReference type="UniProtKB" id="Q01159"/>
    </source>
</evidence>
<evidence type="ECO:0000256" key="3">
    <source>
        <dbReference type="SAM" id="MobiDB-lite"/>
    </source>
</evidence>
<evidence type="ECO:0000305" key="4"/>
<organism>
    <name type="scientific">Yarrowia lipolytica (strain CLIB 122 / E 150)</name>
    <name type="common">Yeast</name>
    <name type="synonym">Candida lipolytica</name>
    <dbReference type="NCBI Taxonomy" id="284591"/>
    <lineage>
        <taxon>Eukaryota</taxon>
        <taxon>Fungi</taxon>
        <taxon>Dikarya</taxon>
        <taxon>Ascomycota</taxon>
        <taxon>Saccharomycotina</taxon>
        <taxon>Dipodascomycetes</taxon>
        <taxon>Dipodascales</taxon>
        <taxon>Dipodascales incertae sedis</taxon>
        <taxon>Yarrowia</taxon>
    </lineage>
</organism>
<keyword id="KW-0342">GTP-binding</keyword>
<keyword id="KW-0506">mRNA capping</keyword>
<keyword id="KW-0507">mRNA processing</keyword>
<keyword id="KW-0547">Nucleotide-binding</keyword>
<keyword id="KW-0548">Nucleotidyltransferase</keyword>
<keyword id="KW-0539">Nucleus</keyword>
<keyword id="KW-1185">Reference proteome</keyword>
<keyword id="KW-0808">Transferase</keyword>
<feature type="chain" id="PRO_0000210105" description="mRNA-capping enzyme subunit alpha">
    <location>
        <begin position="1"/>
        <end position="391"/>
    </location>
</feature>
<feature type="region of interest" description="Disordered" evidence="3">
    <location>
        <begin position="363"/>
        <end position="391"/>
    </location>
</feature>
<feature type="active site" description="N6-GMP-lysine intermediate" evidence="1">
    <location>
        <position position="63"/>
    </location>
</feature>
<protein>
    <recommendedName>
        <fullName>mRNA-capping enzyme subunit alpha</fullName>
    </recommendedName>
    <alternativeName>
        <fullName>GTP--RNA guanylyltransferase</fullName>
        <shortName>GTase</shortName>
    </alternativeName>
    <alternativeName>
        <fullName>mRNA guanylyltransferase</fullName>
        <ecNumber evidence="2">2.7.7.50</ecNumber>
    </alternativeName>
</protein>
<name>MCE1_YARLI</name>
<accession>Q6C783</accession>